<organism evidence="7">
    <name type="scientific">Bos taurus</name>
    <name type="common">Bovine</name>
    <dbReference type="NCBI Taxonomy" id="9913"/>
    <lineage>
        <taxon>Eukaryota</taxon>
        <taxon>Metazoa</taxon>
        <taxon>Chordata</taxon>
        <taxon>Craniata</taxon>
        <taxon>Vertebrata</taxon>
        <taxon>Euteleostomi</taxon>
        <taxon>Mammalia</taxon>
        <taxon>Eutheria</taxon>
        <taxon>Laurasiatheria</taxon>
        <taxon>Artiodactyla</taxon>
        <taxon>Ruminantia</taxon>
        <taxon>Pecora</taxon>
        <taxon>Bovidae</taxon>
        <taxon>Bovinae</taxon>
        <taxon>Bos</taxon>
    </lineage>
</organism>
<reference evidence="7" key="1">
    <citation type="submission" date="2006-08" db="EMBL/GenBank/DDBJ databases">
        <authorList>
            <person name="Moore S."/>
            <person name="Alexander L."/>
            <person name="Brownstein M."/>
            <person name="Guan L."/>
            <person name="Lobo S."/>
            <person name="Meng Y."/>
            <person name="Tanaguchi M."/>
            <person name="Wang Z."/>
            <person name="Yu J."/>
            <person name="Prange C."/>
            <person name="Schreiber K."/>
            <person name="Shenmen C."/>
            <person name="Wagner L."/>
            <person name="Bala M."/>
            <person name="Barbazuk S."/>
            <person name="Barber S."/>
            <person name="Babakaiff R."/>
            <person name="Beland J."/>
            <person name="Chun E."/>
            <person name="Del Rio L."/>
            <person name="Gibson S."/>
            <person name="Hanson R."/>
            <person name="Kirkpatrick R."/>
            <person name="Liu J."/>
            <person name="Matsuo C."/>
            <person name="Mayo M."/>
            <person name="Santos R.R."/>
            <person name="Stott J."/>
            <person name="Tsai M."/>
            <person name="Wong D."/>
            <person name="Siddiqui A."/>
            <person name="Holt R."/>
            <person name="Jones S.J."/>
            <person name="Marra M.A."/>
        </authorList>
    </citation>
    <scope>NUCLEOTIDE SEQUENCE [MRNA]</scope>
    <source>
        <strain evidence="7">Hereford</strain>
        <tissue evidence="7">Brain cortex</tissue>
    </source>
</reference>
<reference evidence="8" key="2">
    <citation type="submission" date="2018-03" db="EMBL/GenBank/DDBJ databases">
        <title>ARS-UCD1.2.</title>
        <authorList>
            <person name="Rosen B.D."/>
            <person name="Bickhart D.M."/>
            <person name="Koren S."/>
            <person name="Schnabel R.D."/>
            <person name="Hall R."/>
            <person name="Zimin A."/>
            <person name="Dreischer C."/>
            <person name="Schultheiss S."/>
            <person name="Schroeder S.G."/>
            <person name="Elsik C.G."/>
            <person name="Couldrey C."/>
            <person name="Liu G.E."/>
            <person name="Van Tassell C.P."/>
            <person name="Phillippy A.M."/>
            <person name="Smith T.P.L."/>
            <person name="Medrano J.F."/>
        </authorList>
    </citation>
    <scope>NUCLEOTIDE SEQUENCE [LARGE SCALE GENOMIC DNA]</scope>
    <source>
        <strain evidence="8">Hereford</strain>
    </source>
</reference>
<reference evidence="10 11" key="3">
    <citation type="journal article" date="2020" name="Nat. Commun.">
        <title>Cryo-EM structures of intact V-ATPase from bovine brain.</title>
        <authorList>
            <person name="Wang R."/>
            <person name="Long T."/>
            <person name="Hassan A."/>
            <person name="Wang J."/>
            <person name="Sun Y."/>
            <person name="Xie X.S."/>
            <person name="Li X."/>
        </authorList>
    </citation>
    <scope>STRUCTURE BY ELECTRON MICROSCOPY (3.37 ANGSTROMS)</scope>
    <scope>FUNCTION</scope>
    <scope>IDENTIFICATION IN THE V-ATPASE COMPLEX</scope>
    <scope>SUBCELLULAR LOCATION</scope>
    <scope>IDENTIFICATION BY MASS SPECTROMETRY</scope>
    <scope>TISSUE SPECIFICITY</scope>
</reference>
<protein>
    <recommendedName>
        <fullName evidence="6">V-type proton ATPase subunit G 2</fullName>
        <shortName evidence="6">V-ATPase subunit G 2</shortName>
    </recommendedName>
    <alternativeName>
        <fullName evidence="6">Vacuolar proton pump subunit G 2</fullName>
    </alternativeName>
</protein>
<evidence type="ECO:0000250" key="1">
    <source>
        <dbReference type="UniProtKB" id="O95670"/>
    </source>
</evidence>
<evidence type="ECO:0000255" key="2"/>
<evidence type="ECO:0000255" key="3">
    <source>
        <dbReference type="RuleBase" id="RU364019"/>
    </source>
</evidence>
<evidence type="ECO:0000256" key="4">
    <source>
        <dbReference type="SAM" id="MobiDB-lite"/>
    </source>
</evidence>
<evidence type="ECO:0000269" key="5">
    <source>
    </source>
</evidence>
<evidence type="ECO:0000305" key="6"/>
<evidence type="ECO:0000312" key="7">
    <source>
        <dbReference type="EMBL" id="AAI19977.1"/>
    </source>
</evidence>
<evidence type="ECO:0000312" key="8">
    <source>
        <dbReference type="Proteomes" id="UP000009136"/>
    </source>
</evidence>
<evidence type="ECO:0000312" key="9">
    <source>
        <dbReference type="VGNC" id="VGNC:57164"/>
    </source>
</evidence>
<evidence type="ECO:0007744" key="10">
    <source>
        <dbReference type="PDB" id="6XBW"/>
    </source>
</evidence>
<evidence type="ECO:0007744" key="11">
    <source>
        <dbReference type="PDB" id="6XBY"/>
    </source>
</evidence>
<evidence type="ECO:0007829" key="12">
    <source>
        <dbReference type="PDB" id="6XBW"/>
    </source>
</evidence>
<feature type="chain" id="PRO_0000454079" description="V-type proton ATPase subunit G 2">
    <location>
        <begin position="1"/>
        <end position="118"/>
    </location>
</feature>
<feature type="region of interest" description="Disordered" evidence="4">
    <location>
        <begin position="25"/>
        <end position="90"/>
    </location>
</feature>
<feature type="coiled-coil region" evidence="2">
    <location>
        <begin position="8"/>
        <end position="57"/>
    </location>
</feature>
<feature type="compositionally biased region" description="Basic and acidic residues" evidence="4">
    <location>
        <begin position="35"/>
        <end position="55"/>
    </location>
</feature>
<feature type="compositionally biased region" description="Polar residues" evidence="4">
    <location>
        <begin position="56"/>
        <end position="69"/>
    </location>
</feature>
<feature type="compositionally biased region" description="Polar residues" evidence="4">
    <location>
        <begin position="78"/>
        <end position="89"/>
    </location>
</feature>
<feature type="helix" evidence="12">
    <location>
        <begin position="7"/>
        <end position="19"/>
    </location>
</feature>
<feature type="helix" evidence="12">
    <location>
        <begin position="21"/>
        <end position="27"/>
    </location>
</feature>
<feature type="turn" evidence="12">
    <location>
        <begin position="28"/>
        <end position="30"/>
    </location>
</feature>
<feature type="helix" evidence="12">
    <location>
        <begin position="31"/>
        <end position="39"/>
    </location>
</feature>
<feature type="helix" evidence="12">
    <location>
        <begin position="44"/>
        <end position="73"/>
    </location>
</feature>
<feature type="helix" evidence="12">
    <location>
        <begin position="76"/>
        <end position="90"/>
    </location>
</feature>
<feature type="helix" evidence="12">
    <location>
        <begin position="92"/>
        <end position="103"/>
    </location>
</feature>
<dbReference type="EMBL" id="BC119976">
    <property type="protein sequence ID" value="AAI19977.1"/>
    <property type="molecule type" value="mRNA"/>
</dbReference>
<dbReference type="RefSeq" id="NP_001069132.1">
    <property type="nucleotide sequence ID" value="NM_001075664.1"/>
</dbReference>
<dbReference type="PDB" id="6XBW">
    <property type="method" value="EM"/>
    <property type="resolution" value="3.37 A"/>
    <property type="chains" value="M/N/O=1-118"/>
</dbReference>
<dbReference type="PDB" id="6XBY">
    <property type="method" value="EM"/>
    <property type="resolution" value="3.79 A"/>
    <property type="chains" value="M/N/O=1-118"/>
</dbReference>
<dbReference type="PDB" id="7KHR">
    <property type="method" value="EM"/>
    <property type="resolution" value="3.62 A"/>
    <property type="chains" value="M/N/O=1-118"/>
</dbReference>
<dbReference type="PDB" id="7UNE">
    <property type="method" value="EM"/>
    <property type="resolution" value="3.73 A"/>
    <property type="chains" value="e/f/g=1-118"/>
</dbReference>
<dbReference type="PDBsum" id="6XBW"/>
<dbReference type="PDBsum" id="6XBY"/>
<dbReference type="PDBsum" id="7KHR"/>
<dbReference type="PDBsum" id="7UNE"/>
<dbReference type="EMDB" id="EMD-22121"/>
<dbReference type="EMDB" id="EMD-22122"/>
<dbReference type="EMDB" id="EMD-22880"/>
<dbReference type="EMDB" id="EMD-26622"/>
<dbReference type="SMR" id="Q0VCV6"/>
<dbReference type="FunCoup" id="Q0VCV6">
    <property type="interactions" value="1744"/>
</dbReference>
<dbReference type="STRING" id="9913.ENSBTAP00000019267"/>
<dbReference type="PaxDb" id="9913-ENSBTAP00000019267"/>
<dbReference type="Ensembl" id="ENSBTAT00000019267.4">
    <property type="protein sequence ID" value="ENSBTAP00000019267.3"/>
    <property type="gene ID" value="ENSBTAG00000014491.5"/>
</dbReference>
<dbReference type="GeneID" id="514368"/>
<dbReference type="KEGG" id="bta:514368"/>
<dbReference type="CTD" id="534"/>
<dbReference type="VEuPathDB" id="HostDB:ENSBTAG00000014491"/>
<dbReference type="VGNC" id="VGNC:57164">
    <property type="gene designation" value="ATP6V1G2"/>
</dbReference>
<dbReference type="eggNOG" id="KOG1772">
    <property type="taxonomic scope" value="Eukaryota"/>
</dbReference>
<dbReference type="GeneTree" id="ENSGT00940000161280"/>
<dbReference type="HOGENOM" id="CLU_125101_1_1_1"/>
<dbReference type="InParanoid" id="Q0VCV6"/>
<dbReference type="OMA" id="EHMGSKD"/>
<dbReference type="OrthoDB" id="250802at2759"/>
<dbReference type="TreeFam" id="TF313777"/>
<dbReference type="Reactome" id="R-BTA-1222556">
    <property type="pathway name" value="ROS and RNS production in phagocytes"/>
</dbReference>
<dbReference type="Reactome" id="R-BTA-77387">
    <property type="pathway name" value="Insulin receptor recycling"/>
</dbReference>
<dbReference type="Reactome" id="R-BTA-917977">
    <property type="pathway name" value="Transferrin endocytosis and recycling"/>
</dbReference>
<dbReference type="Reactome" id="R-BTA-9639288">
    <property type="pathway name" value="Amino acids regulate mTORC1"/>
</dbReference>
<dbReference type="Reactome" id="R-BTA-983712">
    <property type="pathway name" value="Ion channel transport"/>
</dbReference>
<dbReference type="Proteomes" id="UP000009136">
    <property type="component" value="Chromosome 23"/>
</dbReference>
<dbReference type="Bgee" id="ENSBTAG00000014491">
    <property type="expression patterns" value="Expressed in retina and 81 other cell types or tissues"/>
</dbReference>
<dbReference type="GO" id="GO:0030665">
    <property type="term" value="C:clathrin-coated vesicle membrane"/>
    <property type="evidence" value="ECO:0007669"/>
    <property type="project" value="UniProtKB-SubCell"/>
</dbReference>
<dbReference type="GO" id="GO:0042470">
    <property type="term" value="C:melanosome"/>
    <property type="evidence" value="ECO:0007669"/>
    <property type="project" value="UniProtKB-SubCell"/>
</dbReference>
<dbReference type="GO" id="GO:0030672">
    <property type="term" value="C:synaptic vesicle membrane"/>
    <property type="evidence" value="ECO:0000318"/>
    <property type="project" value="GO_Central"/>
</dbReference>
<dbReference type="GO" id="GO:0000221">
    <property type="term" value="C:vacuolar proton-transporting V-type ATPase, V1 domain"/>
    <property type="evidence" value="ECO:0000314"/>
    <property type="project" value="UniProtKB"/>
</dbReference>
<dbReference type="GO" id="GO:0016887">
    <property type="term" value="F:ATP hydrolysis activity"/>
    <property type="evidence" value="ECO:0000318"/>
    <property type="project" value="GO_Central"/>
</dbReference>
<dbReference type="GO" id="GO:0046961">
    <property type="term" value="F:proton-transporting ATPase activity, rotational mechanism"/>
    <property type="evidence" value="ECO:0000318"/>
    <property type="project" value="GO_Central"/>
</dbReference>
<dbReference type="GO" id="GO:0045851">
    <property type="term" value="P:pH reduction"/>
    <property type="evidence" value="ECO:0000305"/>
    <property type="project" value="UniProtKB"/>
</dbReference>
<dbReference type="GO" id="GO:1902600">
    <property type="term" value="P:proton transmembrane transport"/>
    <property type="evidence" value="ECO:0000305"/>
    <property type="project" value="UniProtKB"/>
</dbReference>
<dbReference type="GO" id="GO:0097401">
    <property type="term" value="P:synaptic vesicle lumen acidification"/>
    <property type="evidence" value="ECO:0000318"/>
    <property type="project" value="GO_Central"/>
</dbReference>
<dbReference type="FunFam" id="1.20.5.2950:FF:000001">
    <property type="entry name" value="V-type proton ATPase subunit G"/>
    <property type="match status" value="1"/>
</dbReference>
<dbReference type="Gene3D" id="1.20.5.2950">
    <property type="match status" value="1"/>
</dbReference>
<dbReference type="InterPro" id="IPR005124">
    <property type="entry name" value="V-ATPase_G"/>
</dbReference>
<dbReference type="NCBIfam" id="TIGR01147">
    <property type="entry name" value="V_ATP_synt_G"/>
    <property type="match status" value="1"/>
</dbReference>
<dbReference type="PANTHER" id="PTHR12713:SF13">
    <property type="entry name" value="V-TYPE PROTON ATPASE SUBUNIT G 2"/>
    <property type="match status" value="1"/>
</dbReference>
<dbReference type="PANTHER" id="PTHR12713">
    <property type="entry name" value="VACUOLAR ATP SYNTHASE SUBUNIT G"/>
    <property type="match status" value="1"/>
</dbReference>
<dbReference type="Pfam" id="PF03179">
    <property type="entry name" value="V-ATPase_G"/>
    <property type="match status" value="1"/>
</dbReference>
<proteinExistence type="evidence at protein level"/>
<gene>
    <name evidence="9" type="primary">ATP6V1G2</name>
</gene>
<sequence length="118" mass="13565">MASQSQGIQQLLQAEKRAAEKVADARKRKARRLKQAKEEAQMEVDQYRREREQEFQSKQQAAMGSQGNLSAEVEQATRRQVQGMQSSQQRNRERVLAQLLGMVCDVRPQVHPNYRIAA</sequence>
<name>VATG2_BOVIN</name>
<comment type="function">
    <text evidence="5">Subunit of the V1 complex of vacuolar(H+)-ATPase (V-ATPase), a multisubunit enzyme composed of a peripheral complex (V1) that hydrolyzes ATP and a membrane integral complex (V0) that translocates protons (PubMed:32764564). V-ATPase is responsible for acidifying and maintaining the pH of intracellular compartments and in some cell types, is targeted to the plasma membrane, where it is responsible for acidifying the extracellular environment (PubMed:32764564).</text>
</comment>
<comment type="subunit">
    <text evidence="5">V-ATPase is a heteromultimeric enzyme made up of two complexes: the ATP-hydrolytic V1 complex and the proton translocation V0 complex (PubMed:32764564). The V1 complex consists of three catalytic AB heterodimers that form a heterohexamer, three peripheral stalks each consisting of EG heterodimers, one central rotor including subunits D and F, and the regulatory subunits C and H (PubMed:32764564). The proton translocation complex V0 consists of the proton transport subunit a, a ring of proteolipid subunits c9c'', rotary subunit d, subunits e and f, and the accessory subunits ATP6AP1/Ac45 and ATP6AP2/PRR (PubMed:32764564).</text>
</comment>
<comment type="subcellular location">
    <subcellularLocation>
        <location evidence="1">Melanosome</location>
    </subcellularLocation>
    <subcellularLocation>
        <location evidence="5">Cytoplasmic vesicle</location>
        <location evidence="5">Clathrin-coated vesicle membrane</location>
        <topology evidence="6">Peripheral membrane protein</topology>
    </subcellularLocation>
    <text evidence="1">Highly enriched in late-stage melanosomes.</text>
</comment>
<comment type="tissue specificity">
    <text evidence="5">Expressed in brain (at protein level).</text>
</comment>
<comment type="similarity">
    <text evidence="3">Belongs to the V-ATPase G subunit family.</text>
</comment>
<keyword id="KW-0002">3D-structure</keyword>
<keyword id="KW-0175">Coiled coil</keyword>
<keyword id="KW-0968">Cytoplasmic vesicle</keyword>
<keyword id="KW-0375">Hydrogen ion transport</keyword>
<keyword id="KW-0406">Ion transport</keyword>
<keyword id="KW-0472">Membrane</keyword>
<keyword id="KW-1185">Reference proteome</keyword>
<keyword id="KW-0813">Transport</keyword>
<accession>Q0VCV6</accession>